<dbReference type="EMBL" id="AE016877">
    <property type="protein sequence ID" value="AAP10844.1"/>
    <property type="status" value="ALT_INIT"/>
    <property type="molecule type" value="Genomic_DNA"/>
</dbReference>
<dbReference type="RefSeq" id="NP_833643.1">
    <property type="nucleotide sequence ID" value="NC_004722.1"/>
</dbReference>
<dbReference type="RefSeq" id="WP_164928348.1">
    <property type="nucleotide sequence ID" value="NC_004722.1"/>
</dbReference>
<dbReference type="SMR" id="Q819P4"/>
<dbReference type="STRING" id="226900.BC_3923"/>
<dbReference type="KEGG" id="bce:BC3923"/>
<dbReference type="PATRIC" id="fig|226900.8.peg.4045"/>
<dbReference type="HOGENOM" id="CLU_129084_3_1_9"/>
<dbReference type="Proteomes" id="UP000001417">
    <property type="component" value="Chromosome"/>
</dbReference>
<dbReference type="GO" id="GO:0022625">
    <property type="term" value="C:cytosolic large ribosomal subunit"/>
    <property type="evidence" value="ECO:0000318"/>
    <property type="project" value="GO_Central"/>
</dbReference>
<dbReference type="GO" id="GO:0003735">
    <property type="term" value="F:structural constituent of ribosome"/>
    <property type="evidence" value="ECO:0000318"/>
    <property type="project" value="GO_Central"/>
</dbReference>
<dbReference type="GO" id="GO:0006412">
    <property type="term" value="P:translation"/>
    <property type="evidence" value="ECO:0007669"/>
    <property type="project" value="UniProtKB-UniRule"/>
</dbReference>
<dbReference type="HAMAP" id="MF_00340">
    <property type="entry name" value="Ribosomal_bL32"/>
    <property type="match status" value="1"/>
</dbReference>
<dbReference type="InterPro" id="IPR002677">
    <property type="entry name" value="Ribosomal_bL32"/>
</dbReference>
<dbReference type="InterPro" id="IPR044957">
    <property type="entry name" value="Ribosomal_bL32_bact"/>
</dbReference>
<dbReference type="InterPro" id="IPR011332">
    <property type="entry name" value="Ribosomal_zn-bd"/>
</dbReference>
<dbReference type="NCBIfam" id="TIGR01031">
    <property type="entry name" value="rpmF_bact"/>
    <property type="match status" value="1"/>
</dbReference>
<dbReference type="PANTHER" id="PTHR35534">
    <property type="entry name" value="50S RIBOSOMAL PROTEIN L32"/>
    <property type="match status" value="1"/>
</dbReference>
<dbReference type="PANTHER" id="PTHR35534:SF2">
    <property type="entry name" value="LARGE RIBOSOMAL SUBUNIT PROTEIN BL32"/>
    <property type="match status" value="1"/>
</dbReference>
<dbReference type="Pfam" id="PF01783">
    <property type="entry name" value="Ribosomal_L32p"/>
    <property type="match status" value="1"/>
</dbReference>
<dbReference type="SUPFAM" id="SSF57829">
    <property type="entry name" value="Zn-binding ribosomal proteins"/>
    <property type="match status" value="1"/>
</dbReference>
<protein>
    <recommendedName>
        <fullName evidence="1">Large ribosomal subunit protein bL32</fullName>
    </recommendedName>
    <alternativeName>
        <fullName evidence="2">50S ribosomal protein L32</fullName>
    </alternativeName>
</protein>
<comment type="similarity">
    <text evidence="1">Belongs to the bacterial ribosomal protein bL32 family.</text>
</comment>
<comment type="sequence caution" evidence="2">
    <conflict type="erroneous initiation">
        <sequence resource="EMBL-CDS" id="AAP10844"/>
    </conflict>
</comment>
<evidence type="ECO:0000255" key="1">
    <source>
        <dbReference type="HAMAP-Rule" id="MF_00340"/>
    </source>
</evidence>
<evidence type="ECO:0000305" key="2"/>
<accession>Q819P4</accession>
<keyword id="KW-1185">Reference proteome</keyword>
<keyword id="KW-0687">Ribonucleoprotein</keyword>
<keyword id="KW-0689">Ribosomal protein</keyword>
<name>RL32_BACCR</name>
<feature type="chain" id="PRO_0000296425" description="Large ribosomal subunit protein bL32">
    <location>
        <begin position="1"/>
        <end position="56"/>
    </location>
</feature>
<sequence>MYLFRRTSKAVKRKRRTHFKLSVPGMVECPSCGEAKLAHRVCKACGTYKGKEVISK</sequence>
<proteinExistence type="inferred from homology"/>
<gene>
    <name evidence="1" type="primary">rpmF</name>
    <name type="ordered locus">BC_3923</name>
</gene>
<organism>
    <name type="scientific">Bacillus cereus (strain ATCC 14579 / DSM 31 / CCUG 7414 / JCM 2152 / NBRC 15305 / NCIMB 9373 / NCTC 2599 / NRRL B-3711)</name>
    <dbReference type="NCBI Taxonomy" id="226900"/>
    <lineage>
        <taxon>Bacteria</taxon>
        <taxon>Bacillati</taxon>
        <taxon>Bacillota</taxon>
        <taxon>Bacilli</taxon>
        <taxon>Bacillales</taxon>
        <taxon>Bacillaceae</taxon>
        <taxon>Bacillus</taxon>
        <taxon>Bacillus cereus group</taxon>
    </lineage>
</organism>
<reference key="1">
    <citation type="journal article" date="2003" name="Nature">
        <title>Genome sequence of Bacillus cereus and comparative analysis with Bacillus anthracis.</title>
        <authorList>
            <person name="Ivanova N."/>
            <person name="Sorokin A."/>
            <person name="Anderson I."/>
            <person name="Galleron N."/>
            <person name="Candelon B."/>
            <person name="Kapatral V."/>
            <person name="Bhattacharyya A."/>
            <person name="Reznik G."/>
            <person name="Mikhailova N."/>
            <person name="Lapidus A."/>
            <person name="Chu L."/>
            <person name="Mazur M."/>
            <person name="Goltsman E."/>
            <person name="Larsen N."/>
            <person name="D'Souza M."/>
            <person name="Walunas T."/>
            <person name="Grechkin Y."/>
            <person name="Pusch G."/>
            <person name="Haselkorn R."/>
            <person name="Fonstein M."/>
            <person name="Ehrlich S.D."/>
            <person name="Overbeek R."/>
            <person name="Kyrpides N.C."/>
        </authorList>
    </citation>
    <scope>NUCLEOTIDE SEQUENCE [LARGE SCALE GENOMIC DNA]</scope>
    <source>
        <strain>ATCC 14579 / DSM 31 / CCUG 7414 / JCM 2152 / NBRC 15305 / NCIMB 9373 / NCTC 2599 / NRRL B-3711</strain>
    </source>
</reference>